<keyword id="KW-0963">Cytoplasm</keyword>
<keyword id="KW-0378">Hydrolase</keyword>
<keyword id="KW-0662">Pyridine nucleotide biosynthesis</keyword>
<keyword id="KW-0663">Pyridoxal phosphate</keyword>
<keyword id="KW-1185">Reference proteome</keyword>
<proteinExistence type="inferred from homology"/>
<gene>
    <name type="primary">kyn-2</name>
    <name type="synonym">bna5-2</name>
    <name type="ORF">NCU00463</name>
</gene>
<name>KYNU2_NEUCR</name>
<organism>
    <name type="scientific">Neurospora crassa (strain ATCC 24698 / 74-OR23-1A / CBS 708.71 / DSM 1257 / FGSC 987)</name>
    <dbReference type="NCBI Taxonomy" id="367110"/>
    <lineage>
        <taxon>Eukaryota</taxon>
        <taxon>Fungi</taxon>
        <taxon>Dikarya</taxon>
        <taxon>Ascomycota</taxon>
        <taxon>Pezizomycotina</taxon>
        <taxon>Sordariomycetes</taxon>
        <taxon>Sordariomycetidae</taxon>
        <taxon>Sordariales</taxon>
        <taxon>Sordariaceae</taxon>
        <taxon>Neurospora</taxon>
    </lineage>
</organism>
<reference key="1">
    <citation type="journal article" date="2003" name="Nature">
        <title>The genome sequence of the filamentous fungus Neurospora crassa.</title>
        <authorList>
            <person name="Galagan J.E."/>
            <person name="Calvo S.E."/>
            <person name="Borkovich K.A."/>
            <person name="Selker E.U."/>
            <person name="Read N.D."/>
            <person name="Jaffe D.B."/>
            <person name="FitzHugh W."/>
            <person name="Ma L.-J."/>
            <person name="Smirnov S."/>
            <person name="Purcell S."/>
            <person name="Rehman B."/>
            <person name="Elkins T."/>
            <person name="Engels R."/>
            <person name="Wang S."/>
            <person name="Nielsen C.B."/>
            <person name="Butler J."/>
            <person name="Endrizzi M."/>
            <person name="Qui D."/>
            <person name="Ianakiev P."/>
            <person name="Bell-Pedersen D."/>
            <person name="Nelson M.A."/>
            <person name="Werner-Washburne M."/>
            <person name="Selitrennikoff C.P."/>
            <person name="Kinsey J.A."/>
            <person name="Braun E.L."/>
            <person name="Zelter A."/>
            <person name="Schulte U."/>
            <person name="Kothe G.O."/>
            <person name="Jedd G."/>
            <person name="Mewes H.-W."/>
            <person name="Staben C."/>
            <person name="Marcotte E."/>
            <person name="Greenberg D."/>
            <person name="Roy A."/>
            <person name="Foley K."/>
            <person name="Naylor J."/>
            <person name="Stange-Thomann N."/>
            <person name="Barrett R."/>
            <person name="Gnerre S."/>
            <person name="Kamal M."/>
            <person name="Kamvysselis M."/>
            <person name="Mauceli E.W."/>
            <person name="Bielke C."/>
            <person name="Rudd S."/>
            <person name="Frishman D."/>
            <person name="Krystofova S."/>
            <person name="Rasmussen C."/>
            <person name="Metzenberg R.L."/>
            <person name="Perkins D.D."/>
            <person name="Kroken S."/>
            <person name="Cogoni C."/>
            <person name="Macino G."/>
            <person name="Catcheside D.E.A."/>
            <person name="Li W."/>
            <person name="Pratt R.J."/>
            <person name="Osmani S.A."/>
            <person name="DeSouza C.P.C."/>
            <person name="Glass N.L."/>
            <person name="Orbach M.J."/>
            <person name="Berglund J.A."/>
            <person name="Voelker R."/>
            <person name="Yarden O."/>
            <person name="Plamann M."/>
            <person name="Seiler S."/>
            <person name="Dunlap J.C."/>
            <person name="Radford A."/>
            <person name="Aramayo R."/>
            <person name="Natvig D.O."/>
            <person name="Alex L.A."/>
            <person name="Mannhaupt G."/>
            <person name="Ebbole D.J."/>
            <person name="Freitag M."/>
            <person name="Paulsen I."/>
            <person name="Sachs M.S."/>
            <person name="Lander E.S."/>
            <person name="Nusbaum C."/>
            <person name="Birren B.W."/>
        </authorList>
    </citation>
    <scope>NUCLEOTIDE SEQUENCE [LARGE SCALE GENOMIC DNA]</scope>
    <source>
        <strain>ATCC 24698 / 74-OR23-1A / CBS 708.71 / DSM 1257 / FGSC 987</strain>
    </source>
</reference>
<evidence type="ECO:0000255" key="1">
    <source>
        <dbReference type="HAMAP-Rule" id="MF_03017"/>
    </source>
</evidence>
<feature type="chain" id="PRO_0000218663" description="Kynureninase 2">
    <location>
        <begin position="1"/>
        <end position="472"/>
    </location>
</feature>
<feature type="binding site" evidence="1">
    <location>
        <position position="133"/>
    </location>
    <ligand>
        <name>pyridoxal 5'-phosphate</name>
        <dbReference type="ChEBI" id="CHEBI:597326"/>
    </ligand>
</feature>
<feature type="binding site" evidence="1">
    <location>
        <position position="134"/>
    </location>
    <ligand>
        <name>pyridoxal 5'-phosphate</name>
        <dbReference type="ChEBI" id="CHEBI:597326"/>
    </ligand>
</feature>
<feature type="binding site" evidence="1">
    <location>
        <begin position="162"/>
        <end position="165"/>
    </location>
    <ligand>
        <name>pyridoxal 5'-phosphate</name>
        <dbReference type="ChEBI" id="CHEBI:597326"/>
    </ligand>
</feature>
<feature type="binding site" evidence="1">
    <location>
        <position position="247"/>
    </location>
    <ligand>
        <name>pyridoxal 5'-phosphate</name>
        <dbReference type="ChEBI" id="CHEBI:597326"/>
    </ligand>
</feature>
<feature type="binding site" evidence="1">
    <location>
        <position position="250"/>
    </location>
    <ligand>
        <name>pyridoxal 5'-phosphate</name>
        <dbReference type="ChEBI" id="CHEBI:597326"/>
    </ligand>
</feature>
<feature type="binding site" evidence="1">
    <location>
        <position position="272"/>
    </location>
    <ligand>
        <name>pyridoxal 5'-phosphate</name>
        <dbReference type="ChEBI" id="CHEBI:597326"/>
    </ligand>
</feature>
<feature type="binding site" evidence="1">
    <location>
        <position position="314"/>
    </location>
    <ligand>
        <name>pyridoxal 5'-phosphate</name>
        <dbReference type="ChEBI" id="CHEBI:597326"/>
    </ligand>
</feature>
<feature type="binding site" evidence="1">
    <location>
        <position position="342"/>
    </location>
    <ligand>
        <name>pyridoxal 5'-phosphate</name>
        <dbReference type="ChEBI" id="CHEBI:597326"/>
    </ligand>
</feature>
<feature type="modified residue" description="N6-(pyridoxal phosphate)lysine" evidence="1">
    <location>
        <position position="273"/>
    </location>
</feature>
<protein>
    <recommendedName>
        <fullName evidence="1">Kynureninase 2</fullName>
        <ecNumber evidence="1">3.7.1.3</ecNumber>
    </recommendedName>
    <alternativeName>
        <fullName evidence="1">Biosynthesis of nicotinic acid protein 5-2</fullName>
    </alternativeName>
    <alternativeName>
        <fullName evidence="1">L-kynurenine hydrolase 2</fullName>
    </alternativeName>
</protein>
<accession>Q7RXY2</accession>
<sequence>MSTAAVQDARKQAEALDNEDSIAFVRDEFNIPTKAQIASSRLADSHPAALPASEDDAKCIYLCGNSLGVQPKRTVTRLNQYLTTWATQGVQGHFKPLEESPLPTWLDADAKAAELIAPVVGANVSEVAVMQTLTANIHLLMSAFYRPDINGRHKIILENKAFPSDHFAVETQIRHHSLSTEKSMVLIESSSKDNIISTEEVLSVISAHADTTALLLLPGIQYYTGQLLDIPAITAFAHKHGIFVIWDLAHAVGNVPLYLHDWGVDAAAWCSYKYLNGGPGCIGGLFVHTNNSVVTKEITDEKPEEGYNNRLAGWWGNDKKTRFVMANKFHPVAGAAGFQLSNPSILDITSLSASLEIFQEAGGMEALRSKSLKLTSFLEATLGHMKEEDRAHFRIITPSKSEERGAQLSLMLSDGLLDTVMKELEARGVIVDERKPNVIRVAPAPLYNTFKDCVLFVEAFSAALEVAKQHAL</sequence>
<dbReference type="EC" id="3.7.1.3" evidence="1"/>
<dbReference type="EMBL" id="CM002238">
    <property type="protein sequence ID" value="EAA27546.2"/>
    <property type="molecule type" value="Genomic_DNA"/>
</dbReference>
<dbReference type="RefSeq" id="XP_956782.2">
    <property type="nucleotide sequence ID" value="XM_951689.3"/>
</dbReference>
<dbReference type="SMR" id="Q7RXY2"/>
<dbReference type="FunCoup" id="Q7RXY2">
    <property type="interactions" value="198"/>
</dbReference>
<dbReference type="STRING" id="367110.Q7RXY2"/>
<dbReference type="PaxDb" id="5141-EFNCRP00000000064"/>
<dbReference type="EnsemblFungi" id="EAA27546">
    <property type="protein sequence ID" value="EAA27546"/>
    <property type="gene ID" value="NCU00463"/>
</dbReference>
<dbReference type="GeneID" id="3872929"/>
<dbReference type="KEGG" id="ncr:NCU00463"/>
<dbReference type="VEuPathDB" id="FungiDB:NCU00463"/>
<dbReference type="HOGENOM" id="CLU_003433_4_0_1"/>
<dbReference type="InParanoid" id="Q7RXY2"/>
<dbReference type="OrthoDB" id="5978656at2759"/>
<dbReference type="UniPathway" id="UPA00253">
    <property type="reaction ID" value="UER00329"/>
</dbReference>
<dbReference type="UniPathway" id="UPA00334">
    <property type="reaction ID" value="UER00455"/>
</dbReference>
<dbReference type="Proteomes" id="UP000001805">
    <property type="component" value="Chromosome 3, Linkage Group III"/>
</dbReference>
<dbReference type="GO" id="GO:0005737">
    <property type="term" value="C:cytoplasm"/>
    <property type="evidence" value="ECO:0000318"/>
    <property type="project" value="GO_Central"/>
</dbReference>
<dbReference type="GO" id="GO:0030429">
    <property type="term" value="F:kynureninase activity"/>
    <property type="evidence" value="ECO:0000318"/>
    <property type="project" value="GO_Central"/>
</dbReference>
<dbReference type="GO" id="GO:0030170">
    <property type="term" value="F:pyridoxal phosphate binding"/>
    <property type="evidence" value="ECO:0007669"/>
    <property type="project" value="UniProtKB-UniRule"/>
</dbReference>
<dbReference type="GO" id="GO:0034354">
    <property type="term" value="P:'de novo' NAD biosynthetic process from L-tryptophan"/>
    <property type="evidence" value="ECO:0007669"/>
    <property type="project" value="UniProtKB-UniRule"/>
</dbReference>
<dbReference type="GO" id="GO:0043420">
    <property type="term" value="P:anthranilate metabolic process"/>
    <property type="evidence" value="ECO:0000318"/>
    <property type="project" value="GO_Central"/>
</dbReference>
<dbReference type="GO" id="GO:0097053">
    <property type="term" value="P:L-kynurenine catabolic process"/>
    <property type="evidence" value="ECO:0007669"/>
    <property type="project" value="UniProtKB-UniRule"/>
</dbReference>
<dbReference type="GO" id="GO:0019441">
    <property type="term" value="P:L-tryptophan catabolic process to kynurenine"/>
    <property type="evidence" value="ECO:0000318"/>
    <property type="project" value="GO_Central"/>
</dbReference>
<dbReference type="GO" id="GO:0019805">
    <property type="term" value="P:quinolinate biosynthetic process"/>
    <property type="evidence" value="ECO:0007669"/>
    <property type="project" value="UniProtKB-UniRule"/>
</dbReference>
<dbReference type="FunFam" id="3.40.640.10:FF:000031">
    <property type="entry name" value="Kynureninase"/>
    <property type="match status" value="1"/>
</dbReference>
<dbReference type="Gene3D" id="3.90.1150.10">
    <property type="entry name" value="Aspartate Aminotransferase, domain 1"/>
    <property type="match status" value="1"/>
</dbReference>
<dbReference type="Gene3D" id="3.40.640.10">
    <property type="entry name" value="Type I PLP-dependent aspartate aminotransferase-like (Major domain)"/>
    <property type="match status" value="1"/>
</dbReference>
<dbReference type="HAMAP" id="MF_01970">
    <property type="entry name" value="Kynureninase"/>
    <property type="match status" value="1"/>
</dbReference>
<dbReference type="InterPro" id="IPR000192">
    <property type="entry name" value="Aminotrans_V_dom"/>
</dbReference>
<dbReference type="InterPro" id="IPR010111">
    <property type="entry name" value="Kynureninase"/>
</dbReference>
<dbReference type="InterPro" id="IPR015424">
    <property type="entry name" value="PyrdxlP-dep_Trfase"/>
</dbReference>
<dbReference type="InterPro" id="IPR015421">
    <property type="entry name" value="PyrdxlP-dep_Trfase_major"/>
</dbReference>
<dbReference type="InterPro" id="IPR015422">
    <property type="entry name" value="PyrdxlP-dep_Trfase_small"/>
</dbReference>
<dbReference type="NCBIfam" id="TIGR01814">
    <property type="entry name" value="kynureninase"/>
    <property type="match status" value="1"/>
</dbReference>
<dbReference type="PANTHER" id="PTHR14084">
    <property type="entry name" value="KYNURENINASE"/>
    <property type="match status" value="1"/>
</dbReference>
<dbReference type="PANTHER" id="PTHR14084:SF0">
    <property type="entry name" value="KYNURENINASE"/>
    <property type="match status" value="1"/>
</dbReference>
<dbReference type="Pfam" id="PF00266">
    <property type="entry name" value="Aminotran_5"/>
    <property type="match status" value="1"/>
</dbReference>
<dbReference type="Pfam" id="PF22580">
    <property type="entry name" value="KYNU_C"/>
    <property type="match status" value="1"/>
</dbReference>
<dbReference type="PIRSF" id="PIRSF038800">
    <property type="entry name" value="KYNU"/>
    <property type="match status" value="1"/>
</dbReference>
<dbReference type="SUPFAM" id="SSF53383">
    <property type="entry name" value="PLP-dependent transferases"/>
    <property type="match status" value="1"/>
</dbReference>
<comment type="function">
    <text evidence="1">Catalyzes the cleavage of L-kynurenine (L-Kyn) and L-3-hydroxykynurenine (L-3OHKyn) into anthranilic acid (AA) and 3-hydroxyanthranilic acid (3-OHAA), respectively.</text>
</comment>
<comment type="catalytic activity">
    <reaction evidence="1">
        <text>L-kynurenine + H2O = anthranilate + L-alanine + H(+)</text>
        <dbReference type="Rhea" id="RHEA:16813"/>
        <dbReference type="ChEBI" id="CHEBI:15377"/>
        <dbReference type="ChEBI" id="CHEBI:15378"/>
        <dbReference type="ChEBI" id="CHEBI:16567"/>
        <dbReference type="ChEBI" id="CHEBI:57959"/>
        <dbReference type="ChEBI" id="CHEBI:57972"/>
        <dbReference type="EC" id="3.7.1.3"/>
    </reaction>
</comment>
<comment type="catalytic activity">
    <reaction evidence="1">
        <text>3-hydroxy-L-kynurenine + H2O = 3-hydroxyanthranilate + L-alanine + H(+)</text>
        <dbReference type="Rhea" id="RHEA:25143"/>
        <dbReference type="ChEBI" id="CHEBI:15377"/>
        <dbReference type="ChEBI" id="CHEBI:15378"/>
        <dbReference type="ChEBI" id="CHEBI:36559"/>
        <dbReference type="ChEBI" id="CHEBI:57972"/>
        <dbReference type="ChEBI" id="CHEBI:58125"/>
        <dbReference type="EC" id="3.7.1.3"/>
    </reaction>
</comment>
<comment type="cofactor">
    <cofactor evidence="1">
        <name>pyridoxal 5'-phosphate</name>
        <dbReference type="ChEBI" id="CHEBI:597326"/>
    </cofactor>
</comment>
<comment type="pathway">
    <text evidence="1">Amino-acid degradation; L-kynurenine degradation; L-alanine and anthranilate from L-kynurenine: step 1/1.</text>
</comment>
<comment type="pathway">
    <text evidence="1">Cofactor biosynthesis; NAD(+) biosynthesis; quinolinate from L-kynurenine: step 2/3.</text>
</comment>
<comment type="subunit">
    <text evidence="1">Homodimer.</text>
</comment>
<comment type="subcellular location">
    <subcellularLocation>
        <location evidence="1">Cytoplasm</location>
    </subcellularLocation>
</comment>
<comment type="similarity">
    <text evidence="1">Belongs to the kynureninase family.</text>
</comment>